<protein>
    <recommendedName>
        <fullName>Possible hemolysin C</fullName>
    </recommendedName>
</protein>
<organism>
    <name type="scientific">Rickettsia canadensis (strain McKiel)</name>
    <dbReference type="NCBI Taxonomy" id="293613"/>
    <lineage>
        <taxon>Bacteria</taxon>
        <taxon>Pseudomonadati</taxon>
        <taxon>Pseudomonadota</taxon>
        <taxon>Alphaproteobacteria</taxon>
        <taxon>Rickettsiales</taxon>
        <taxon>Rickettsiaceae</taxon>
        <taxon>Rickettsieae</taxon>
        <taxon>Rickettsia</taxon>
        <taxon>belli group</taxon>
    </lineage>
</organism>
<name>HLYC_RICCK</name>
<evidence type="ECO:0000255" key="1">
    <source>
        <dbReference type="PROSITE-ProRule" id="PRU00703"/>
    </source>
</evidence>
<evidence type="ECO:0000305" key="2"/>
<gene>
    <name type="primary">tlyC</name>
    <name type="ordered locus">A1E_04760</name>
</gene>
<comment type="miscellaneous">
    <text>It is not know if this bacteria is hemolytic.</text>
</comment>
<comment type="similarity">
    <text evidence="2">Belongs to the UPF0053 family. Hemolysin C subfamily.</text>
</comment>
<keyword id="KW-0129">CBS domain</keyword>
<keyword id="KW-0677">Repeat</keyword>
<feature type="chain" id="PRO_0000319029" description="Possible hemolysin C">
    <location>
        <begin position="1"/>
        <end position="298"/>
    </location>
</feature>
<feature type="domain" description="CBS 1" evidence="1">
    <location>
        <begin position="80"/>
        <end position="141"/>
    </location>
</feature>
<feature type="domain" description="CBS 2" evidence="1">
    <location>
        <begin position="145"/>
        <end position="202"/>
    </location>
</feature>
<accession>A8EZU0</accession>
<proteinExistence type="inferred from homology"/>
<dbReference type="EMBL" id="CP000409">
    <property type="protein sequence ID" value="ABV73873.1"/>
    <property type="molecule type" value="Genomic_DNA"/>
</dbReference>
<dbReference type="RefSeq" id="WP_012149068.1">
    <property type="nucleotide sequence ID" value="NC_009879.1"/>
</dbReference>
<dbReference type="SMR" id="A8EZU0"/>
<dbReference type="STRING" id="293613.A1E_04760"/>
<dbReference type="KEGG" id="rcm:A1E_04760"/>
<dbReference type="eggNOG" id="COG1253">
    <property type="taxonomic scope" value="Bacteria"/>
</dbReference>
<dbReference type="HOGENOM" id="CLU_015237_3_1_5"/>
<dbReference type="Proteomes" id="UP000007056">
    <property type="component" value="Chromosome"/>
</dbReference>
<dbReference type="GO" id="GO:0005886">
    <property type="term" value="C:plasma membrane"/>
    <property type="evidence" value="ECO:0007669"/>
    <property type="project" value="TreeGrafter"/>
</dbReference>
<dbReference type="GO" id="GO:0050660">
    <property type="term" value="F:flavin adenine dinucleotide binding"/>
    <property type="evidence" value="ECO:0007669"/>
    <property type="project" value="InterPro"/>
</dbReference>
<dbReference type="CDD" id="cd04590">
    <property type="entry name" value="CBS_pair_CorC_HlyC_assoc"/>
    <property type="match status" value="1"/>
</dbReference>
<dbReference type="FunFam" id="3.10.580.10:FF:000002">
    <property type="entry name" value="Magnesium/cobalt efflux protein CorC"/>
    <property type="match status" value="1"/>
</dbReference>
<dbReference type="Gene3D" id="3.30.465.10">
    <property type="match status" value="1"/>
</dbReference>
<dbReference type="Gene3D" id="3.10.580.10">
    <property type="entry name" value="CBS-domain"/>
    <property type="match status" value="1"/>
</dbReference>
<dbReference type="InterPro" id="IPR000644">
    <property type="entry name" value="CBS_dom"/>
</dbReference>
<dbReference type="InterPro" id="IPR046342">
    <property type="entry name" value="CBS_dom_sf"/>
</dbReference>
<dbReference type="InterPro" id="IPR036318">
    <property type="entry name" value="FAD-bd_PCMH-like_sf"/>
</dbReference>
<dbReference type="InterPro" id="IPR016169">
    <property type="entry name" value="FAD-bd_PCMH_sub2"/>
</dbReference>
<dbReference type="InterPro" id="IPR044751">
    <property type="entry name" value="Ion_transp-like_CBS"/>
</dbReference>
<dbReference type="InterPro" id="IPR005170">
    <property type="entry name" value="Transptr-assoc_dom"/>
</dbReference>
<dbReference type="PANTHER" id="PTHR22777">
    <property type="entry name" value="HEMOLYSIN-RELATED"/>
    <property type="match status" value="1"/>
</dbReference>
<dbReference type="PANTHER" id="PTHR22777:SF27">
    <property type="entry name" value="MAGNESIUM AND COBALT EFFLUX PROTEIN CORC"/>
    <property type="match status" value="1"/>
</dbReference>
<dbReference type="Pfam" id="PF00571">
    <property type="entry name" value="CBS"/>
    <property type="match status" value="1"/>
</dbReference>
<dbReference type="Pfam" id="PF03471">
    <property type="entry name" value="CorC_HlyC"/>
    <property type="match status" value="1"/>
</dbReference>
<dbReference type="SMART" id="SM01091">
    <property type="entry name" value="CorC_HlyC"/>
    <property type="match status" value="1"/>
</dbReference>
<dbReference type="SUPFAM" id="SSF54631">
    <property type="entry name" value="CBS-domain pair"/>
    <property type="match status" value="1"/>
</dbReference>
<dbReference type="SUPFAM" id="SSF56176">
    <property type="entry name" value="FAD-binding/transporter-associated domain-like"/>
    <property type="match status" value="1"/>
</dbReference>
<dbReference type="PROSITE" id="PS51371">
    <property type="entry name" value="CBS"/>
    <property type="match status" value="2"/>
</dbReference>
<sequence>MFKSSKKEDSSKKNHNNKLIFAIRKLFSPIKNFFRQTKTPDNFFGVIKRLKINNQKMTLDECNIFANLLKIKDKTIADIMVPRSDIAAIKLTTNLEELSESIKLKVLHARTLIYDGTLDNVVGFIHIKDLFKAFATKQNGCLKKLIRKHIIAAPSMKLLDLLTKMRRERTHIAIVVDEYGGTDGLVTIEDLIEEIVGRIDDEHDQQLDSDNLKVINNSTIILNARVEVEVLEEIIGEKLKNDDEFDTIGGLVLTRVGSVPAIGTRINISENIEIEVTDATPRSLKQVKIRLKNALNSG</sequence>
<reference key="1">
    <citation type="submission" date="2007-09" db="EMBL/GenBank/DDBJ databases">
        <title>Complete genome sequence of Rickettsia canadensis.</title>
        <authorList>
            <person name="Madan A."/>
            <person name="Fahey J."/>
            <person name="Helton E."/>
            <person name="Ketteman M."/>
            <person name="Madan A."/>
            <person name="Rodrigues S."/>
            <person name="Sanchez A."/>
            <person name="Whiting M."/>
            <person name="Dasch G."/>
            <person name="Eremeeva M."/>
        </authorList>
    </citation>
    <scope>NUCLEOTIDE SEQUENCE [LARGE SCALE GENOMIC DNA]</scope>
    <source>
        <strain>McKiel</strain>
    </source>
</reference>